<proteinExistence type="inferred from homology"/>
<keyword id="KW-0131">Cell cycle</keyword>
<keyword id="KW-0132">Cell division</keyword>
<keyword id="KW-0159">Chromosome partition</keyword>
<keyword id="KW-0963">Cytoplasm</keyword>
<keyword id="KW-0229">DNA integration</keyword>
<keyword id="KW-0233">DNA recombination</keyword>
<keyword id="KW-0238">DNA-binding</keyword>
<comment type="function">
    <text evidence="1">Site-specific tyrosine recombinase, which acts by catalyzing the cutting and rejoining of the recombining DNA molecules. Essential to convert dimers of the bacterial chromosome into monomers to permit their segregation at cell division.</text>
</comment>
<comment type="activity regulation">
    <text evidence="1">FtsK is required for recombination.</text>
</comment>
<comment type="subcellular location">
    <subcellularLocation>
        <location evidence="1">Cytoplasm</location>
    </subcellularLocation>
</comment>
<comment type="similarity">
    <text evidence="1">Belongs to the 'phage' integrase family. XerS subfamily.</text>
</comment>
<organism>
    <name type="scientific">Streptococcus agalactiae serotype III (strain NEM316)</name>
    <dbReference type="NCBI Taxonomy" id="211110"/>
    <lineage>
        <taxon>Bacteria</taxon>
        <taxon>Bacillati</taxon>
        <taxon>Bacillota</taxon>
        <taxon>Bacilli</taxon>
        <taxon>Lactobacillales</taxon>
        <taxon>Streptococcaceae</taxon>
        <taxon>Streptococcus</taxon>
    </lineage>
</organism>
<dbReference type="EMBL" id="AL766848">
    <property type="protein sequence ID" value="CAD46624.1"/>
    <property type="molecule type" value="Genomic_DNA"/>
</dbReference>
<dbReference type="RefSeq" id="WP_000817930.1">
    <property type="nucleotide sequence ID" value="NC_004368.1"/>
</dbReference>
<dbReference type="SMR" id="P67632"/>
<dbReference type="KEGG" id="san:gbs0965"/>
<dbReference type="eggNOG" id="COG4974">
    <property type="taxonomic scope" value="Bacteria"/>
</dbReference>
<dbReference type="HOGENOM" id="CLU_027562_9_6_9"/>
<dbReference type="Proteomes" id="UP000000823">
    <property type="component" value="Chromosome"/>
</dbReference>
<dbReference type="GO" id="GO:0005737">
    <property type="term" value="C:cytoplasm"/>
    <property type="evidence" value="ECO:0007669"/>
    <property type="project" value="UniProtKB-SubCell"/>
</dbReference>
<dbReference type="GO" id="GO:0003677">
    <property type="term" value="F:DNA binding"/>
    <property type="evidence" value="ECO:0007669"/>
    <property type="project" value="UniProtKB-KW"/>
</dbReference>
<dbReference type="GO" id="GO:0009037">
    <property type="term" value="F:tyrosine-based site-specific recombinase activity"/>
    <property type="evidence" value="ECO:0007669"/>
    <property type="project" value="UniProtKB-UniRule"/>
</dbReference>
<dbReference type="GO" id="GO:0051301">
    <property type="term" value="P:cell division"/>
    <property type="evidence" value="ECO:0007669"/>
    <property type="project" value="UniProtKB-KW"/>
</dbReference>
<dbReference type="GO" id="GO:0007059">
    <property type="term" value="P:chromosome segregation"/>
    <property type="evidence" value="ECO:0007669"/>
    <property type="project" value="UniProtKB-UniRule"/>
</dbReference>
<dbReference type="GO" id="GO:0006310">
    <property type="term" value="P:DNA recombination"/>
    <property type="evidence" value="ECO:0007669"/>
    <property type="project" value="UniProtKB-UniRule"/>
</dbReference>
<dbReference type="CDD" id="cd00397">
    <property type="entry name" value="DNA_BRE_C"/>
    <property type="match status" value="1"/>
</dbReference>
<dbReference type="Gene3D" id="1.10.150.130">
    <property type="match status" value="1"/>
</dbReference>
<dbReference type="Gene3D" id="1.10.443.10">
    <property type="entry name" value="Intergrase catalytic core"/>
    <property type="match status" value="1"/>
</dbReference>
<dbReference type="HAMAP" id="MF_01816">
    <property type="entry name" value="Recomb_XerS"/>
    <property type="match status" value="1"/>
</dbReference>
<dbReference type="InterPro" id="IPR044068">
    <property type="entry name" value="CB"/>
</dbReference>
<dbReference type="InterPro" id="IPR011010">
    <property type="entry name" value="DNA_brk_join_enz"/>
</dbReference>
<dbReference type="InterPro" id="IPR013762">
    <property type="entry name" value="Integrase-like_cat_sf"/>
</dbReference>
<dbReference type="InterPro" id="IPR002104">
    <property type="entry name" value="Integrase_catalytic"/>
</dbReference>
<dbReference type="InterPro" id="IPR010998">
    <property type="entry name" value="Integrase_recombinase_N"/>
</dbReference>
<dbReference type="InterPro" id="IPR004107">
    <property type="entry name" value="Integrase_SAM-like_N"/>
</dbReference>
<dbReference type="InterPro" id="IPR023670">
    <property type="entry name" value="Recomb_XerS"/>
</dbReference>
<dbReference type="InterPro" id="IPR050090">
    <property type="entry name" value="Tyrosine_recombinase_XerCD"/>
</dbReference>
<dbReference type="NCBIfam" id="NF003462">
    <property type="entry name" value="PRK05084.1"/>
    <property type="match status" value="1"/>
</dbReference>
<dbReference type="PANTHER" id="PTHR30349">
    <property type="entry name" value="PHAGE INTEGRASE-RELATED"/>
    <property type="match status" value="1"/>
</dbReference>
<dbReference type="PANTHER" id="PTHR30349:SF77">
    <property type="entry name" value="TYROSINE RECOMBINASE XERC"/>
    <property type="match status" value="1"/>
</dbReference>
<dbReference type="Pfam" id="PF02899">
    <property type="entry name" value="Phage_int_SAM_1"/>
    <property type="match status" value="1"/>
</dbReference>
<dbReference type="Pfam" id="PF00589">
    <property type="entry name" value="Phage_integrase"/>
    <property type="match status" value="1"/>
</dbReference>
<dbReference type="SUPFAM" id="SSF56349">
    <property type="entry name" value="DNA breaking-rejoining enzymes"/>
    <property type="match status" value="1"/>
</dbReference>
<dbReference type="PROSITE" id="PS51900">
    <property type="entry name" value="CB"/>
    <property type="match status" value="1"/>
</dbReference>
<dbReference type="PROSITE" id="PS51898">
    <property type="entry name" value="TYR_RECOMBINASE"/>
    <property type="match status" value="1"/>
</dbReference>
<sequence>MKRELLLEKIDELKEIMPWYVLEYYQSKLSVPYSFTTLYEYLKEYRRFLEWLLDSGVANCHHIAEIELSVLENLTKKDMEAFILYLRERPLLNANTRQNGVSQTTINRTLSALSSLFKYLTEEVENADGEPYFYRNVMKKVSTKKKKETLASRAENIKQKLFLGNETIEFLEYIDCEYQNKLSKRALAFFNKNKERDLAIIALLLASGVRLSEAVNLDLKDINLNVMVIDVTRKGGKRDSVNVASFAKPYLANYLDIRKNRYKAENQDIALFLSEYRGVPNRIDASSVEKMVAKYSQDFKVRVTPHKLRHTLATRLYDATKSQVLVSHQLGHASTQVTDLYTHIVNDEQKNALDKL</sequence>
<reference key="1">
    <citation type="journal article" date="2002" name="Mol. Microbiol.">
        <title>Genome sequence of Streptococcus agalactiae, a pathogen causing invasive neonatal disease.</title>
        <authorList>
            <person name="Glaser P."/>
            <person name="Rusniok C."/>
            <person name="Buchrieser C."/>
            <person name="Chevalier F."/>
            <person name="Frangeul L."/>
            <person name="Msadek T."/>
            <person name="Zouine M."/>
            <person name="Couve E."/>
            <person name="Lalioui L."/>
            <person name="Poyart C."/>
            <person name="Trieu-Cuot P."/>
            <person name="Kunst F."/>
        </authorList>
    </citation>
    <scope>NUCLEOTIDE SEQUENCE [LARGE SCALE GENOMIC DNA]</scope>
    <source>
        <strain>NEM316</strain>
    </source>
</reference>
<feature type="chain" id="PRO_0000095360" description="Tyrosine recombinase XerS">
    <location>
        <begin position="1"/>
        <end position="356"/>
    </location>
</feature>
<feature type="domain" description="Core-binding (CB)" evidence="3">
    <location>
        <begin position="16"/>
        <end position="121"/>
    </location>
</feature>
<feature type="domain" description="Tyr recombinase" evidence="2">
    <location>
        <begin position="169"/>
        <end position="354"/>
    </location>
</feature>
<feature type="active site" evidence="1">
    <location>
        <position position="210"/>
    </location>
</feature>
<feature type="active site" evidence="1">
    <location>
        <position position="234"/>
    </location>
</feature>
<feature type="active site" evidence="1">
    <location>
        <position position="306"/>
    </location>
</feature>
<feature type="active site" evidence="1">
    <location>
        <position position="309"/>
    </location>
</feature>
<feature type="active site" evidence="1">
    <location>
        <position position="332"/>
    </location>
</feature>
<feature type="active site" description="O-(3'-phospho-DNA)-tyrosine intermediate" evidence="1">
    <location>
        <position position="341"/>
    </location>
</feature>
<evidence type="ECO:0000255" key="1">
    <source>
        <dbReference type="HAMAP-Rule" id="MF_01816"/>
    </source>
</evidence>
<evidence type="ECO:0000255" key="2">
    <source>
        <dbReference type="PROSITE-ProRule" id="PRU01246"/>
    </source>
</evidence>
<evidence type="ECO:0000255" key="3">
    <source>
        <dbReference type="PROSITE-ProRule" id="PRU01248"/>
    </source>
</evidence>
<name>XERS_STRA3</name>
<gene>
    <name evidence="1" type="primary">xerS</name>
    <name type="ordered locus">gbs0965</name>
</gene>
<accession>P67632</accession>
<accession>Q7ZAL3</accession>
<accession>Q7ZAL7</accession>
<protein>
    <recommendedName>
        <fullName evidence="1">Tyrosine recombinase XerS</fullName>
    </recommendedName>
</protein>